<evidence type="ECO:0000255" key="1">
    <source>
        <dbReference type="HAMAP-Rule" id="MF_01210"/>
    </source>
</evidence>
<sequence length="1106" mass="122413">MPKRNDLNKVLIIGSGPIIIGQAVEFDYAGTQACSVLREEGIEVVLVNSNPATIMTDTNMADKVYLEPLEKDYIIKIIEKERPDGLIATMGGQVGLNLAMELVDSGILDKYEVDLLGTTMSSIKKAEDRDVFKTTMNDIGEPIPESKIVSTVDQAKDFAKNIGYPVIVRPAYTLGGTGGGVAQNEQQLSQIASNGIRSSLINQILVERCVIGWKEVEYEVMRDKKGNCITICNMENMDPVGVHTGDSIVAAPSQTLTNQEHQMLRQAALKIIGELQIEGGCNIQFALDPHSNDYYVIEVNPRVSRSSALASKATGYPIARVASKIAIGYSLDEIYNQVTGKTSACFEPSLDYVVLKLPRFPFDKFDLADRQLGTQMKATGEVMSIGRNFENAFLKALRSLEIDLDDLHQSIQEVDKELRQEEILKQLGKQTDERMFWLLQAIRKQISLQDIHDLTSIDMFFLQKLKNIVSYELEFSQLESQFKAESDEKNVEEIEEKLVEKKISSSNQQLQLLSEAKEAGLSDTMISASTGLTEEQIKNIRLQHNITPAYKMVDTCAGEFEANTPYYYSAYNEENEAIPPSEPTHDKRVLVLGAGPIRIGQGVEFDYCSVHSVMALKDLGYESLIINNNPETVSTDFNISDRLYFEPLFTEDVNSVIAQEKPQGVITQFGGQTAVNLARPLANDGAEVLGTSVSDMDRAENRDKFDQLLNKLGIDRPKGKTATSTKEAKEIADELGYPLVVRPSYVLGGRAMEVVYTPEDLETYMTWAVEVSPEYPVLIDQFLQGMEIEIDAVCDGQDVIIPGIMEHIERAGVHSGDSMAMFPAKSLDEITRDKIVSYTEALAKGLNIKGIINIQYVVYNGKVYVIEVNPRASRTVPFISKITGIPMVKIATKAMMGQSFQDQGYKPGLMPEPDYYAVKAPVFSFAKLTRVDTSLGPEMKSTGEVMGIDYDLNTALYKAMLASGFSINLNGGVLVTVADRDKEAVRPLVERFQKLGLKIFATSGTAEFLRNQGIDVEQVPKIVDESPNIIDLIREGQINYVINTFTIGKEPARDGFKIRRAAVENGIPCLTSLDTASALLTAMESLDRGESKQVKSLQDYLKELSN</sequence>
<keyword id="KW-0028">Amino-acid biosynthesis</keyword>
<keyword id="KW-0055">Arginine biosynthesis</keyword>
<keyword id="KW-0067">ATP-binding</keyword>
<keyword id="KW-0436">Ligase</keyword>
<keyword id="KW-0460">Magnesium</keyword>
<keyword id="KW-0464">Manganese</keyword>
<keyword id="KW-0479">Metal-binding</keyword>
<keyword id="KW-0547">Nucleotide-binding</keyword>
<keyword id="KW-0665">Pyrimidine biosynthesis</keyword>
<keyword id="KW-1185">Reference proteome</keyword>
<keyword id="KW-0677">Repeat</keyword>
<feature type="chain" id="PRO_1000138897" description="Carbamoyl phosphate synthase large chain">
    <location>
        <begin position="1"/>
        <end position="1106"/>
    </location>
</feature>
<feature type="domain" description="ATP-grasp 1" evidence="1">
    <location>
        <begin position="133"/>
        <end position="327"/>
    </location>
</feature>
<feature type="domain" description="ATP-grasp 2" evidence="1">
    <location>
        <begin position="706"/>
        <end position="896"/>
    </location>
</feature>
<feature type="domain" description="MGS-like" evidence="1">
    <location>
        <begin position="965"/>
        <end position="1106"/>
    </location>
</feature>
<feature type="region of interest" description="Carboxyphosphate synthetic domain" evidence="1">
    <location>
        <begin position="1"/>
        <end position="401"/>
    </location>
</feature>
<feature type="region of interest" description="Oligomerization domain" evidence="1">
    <location>
        <begin position="402"/>
        <end position="577"/>
    </location>
</feature>
<feature type="region of interest" description="Carbamoyl phosphate synthetic domain" evidence="1">
    <location>
        <begin position="578"/>
        <end position="964"/>
    </location>
</feature>
<feature type="region of interest" description="Allosteric domain" evidence="1">
    <location>
        <begin position="965"/>
        <end position="1106"/>
    </location>
</feature>
<feature type="binding site" evidence="1">
    <location>
        <position position="129"/>
    </location>
    <ligand>
        <name>ATP</name>
        <dbReference type="ChEBI" id="CHEBI:30616"/>
        <label>1</label>
    </ligand>
</feature>
<feature type="binding site" evidence="1">
    <location>
        <position position="169"/>
    </location>
    <ligand>
        <name>ATP</name>
        <dbReference type="ChEBI" id="CHEBI:30616"/>
        <label>1</label>
    </ligand>
</feature>
<feature type="binding site" evidence="1">
    <location>
        <position position="175"/>
    </location>
    <ligand>
        <name>ATP</name>
        <dbReference type="ChEBI" id="CHEBI:30616"/>
        <label>1</label>
    </ligand>
</feature>
<feature type="binding site" evidence="1">
    <location>
        <position position="176"/>
    </location>
    <ligand>
        <name>ATP</name>
        <dbReference type="ChEBI" id="CHEBI:30616"/>
        <label>1</label>
    </ligand>
</feature>
<feature type="binding site" evidence="1">
    <location>
        <position position="208"/>
    </location>
    <ligand>
        <name>ATP</name>
        <dbReference type="ChEBI" id="CHEBI:30616"/>
        <label>1</label>
    </ligand>
</feature>
<feature type="binding site" evidence="1">
    <location>
        <position position="210"/>
    </location>
    <ligand>
        <name>ATP</name>
        <dbReference type="ChEBI" id="CHEBI:30616"/>
        <label>1</label>
    </ligand>
</feature>
<feature type="binding site" evidence="1">
    <location>
        <position position="215"/>
    </location>
    <ligand>
        <name>ATP</name>
        <dbReference type="ChEBI" id="CHEBI:30616"/>
        <label>1</label>
    </ligand>
</feature>
<feature type="binding site" evidence="1">
    <location>
        <position position="241"/>
    </location>
    <ligand>
        <name>ATP</name>
        <dbReference type="ChEBI" id="CHEBI:30616"/>
        <label>1</label>
    </ligand>
</feature>
<feature type="binding site" evidence="1">
    <location>
        <position position="242"/>
    </location>
    <ligand>
        <name>ATP</name>
        <dbReference type="ChEBI" id="CHEBI:30616"/>
        <label>1</label>
    </ligand>
</feature>
<feature type="binding site" evidence="1">
    <location>
        <position position="243"/>
    </location>
    <ligand>
        <name>ATP</name>
        <dbReference type="ChEBI" id="CHEBI:30616"/>
        <label>1</label>
    </ligand>
</feature>
<feature type="binding site" evidence="1">
    <location>
        <position position="284"/>
    </location>
    <ligand>
        <name>ATP</name>
        <dbReference type="ChEBI" id="CHEBI:30616"/>
        <label>1</label>
    </ligand>
</feature>
<feature type="binding site" evidence="1">
    <location>
        <position position="284"/>
    </location>
    <ligand>
        <name>Mg(2+)</name>
        <dbReference type="ChEBI" id="CHEBI:18420"/>
        <label>1</label>
    </ligand>
</feature>
<feature type="binding site" evidence="1">
    <location>
        <position position="284"/>
    </location>
    <ligand>
        <name>Mn(2+)</name>
        <dbReference type="ChEBI" id="CHEBI:29035"/>
        <label>1</label>
    </ligand>
</feature>
<feature type="binding site" evidence="1">
    <location>
        <position position="298"/>
    </location>
    <ligand>
        <name>ATP</name>
        <dbReference type="ChEBI" id="CHEBI:30616"/>
        <label>1</label>
    </ligand>
</feature>
<feature type="binding site" evidence="1">
    <location>
        <position position="298"/>
    </location>
    <ligand>
        <name>Mg(2+)</name>
        <dbReference type="ChEBI" id="CHEBI:18420"/>
        <label>1</label>
    </ligand>
</feature>
<feature type="binding site" evidence="1">
    <location>
        <position position="298"/>
    </location>
    <ligand>
        <name>Mg(2+)</name>
        <dbReference type="ChEBI" id="CHEBI:18420"/>
        <label>2</label>
    </ligand>
</feature>
<feature type="binding site" evidence="1">
    <location>
        <position position="298"/>
    </location>
    <ligand>
        <name>Mn(2+)</name>
        <dbReference type="ChEBI" id="CHEBI:29035"/>
        <label>1</label>
    </ligand>
</feature>
<feature type="binding site" evidence="1">
    <location>
        <position position="298"/>
    </location>
    <ligand>
        <name>Mn(2+)</name>
        <dbReference type="ChEBI" id="CHEBI:29035"/>
        <label>2</label>
    </ligand>
</feature>
<feature type="binding site" evidence="1">
    <location>
        <position position="300"/>
    </location>
    <ligand>
        <name>Mg(2+)</name>
        <dbReference type="ChEBI" id="CHEBI:18420"/>
        <label>2</label>
    </ligand>
</feature>
<feature type="binding site" evidence="1">
    <location>
        <position position="300"/>
    </location>
    <ligand>
        <name>Mn(2+)</name>
        <dbReference type="ChEBI" id="CHEBI:29035"/>
        <label>2</label>
    </ligand>
</feature>
<feature type="binding site" evidence="1">
    <location>
        <position position="742"/>
    </location>
    <ligand>
        <name>ATP</name>
        <dbReference type="ChEBI" id="CHEBI:30616"/>
        <label>2</label>
    </ligand>
</feature>
<feature type="binding site" evidence="1">
    <location>
        <position position="781"/>
    </location>
    <ligand>
        <name>ATP</name>
        <dbReference type="ChEBI" id="CHEBI:30616"/>
        <label>2</label>
    </ligand>
</feature>
<feature type="binding site" evidence="1">
    <location>
        <position position="783"/>
    </location>
    <ligand>
        <name>ATP</name>
        <dbReference type="ChEBI" id="CHEBI:30616"/>
        <label>2</label>
    </ligand>
</feature>
<feature type="binding site" evidence="1">
    <location>
        <position position="787"/>
    </location>
    <ligand>
        <name>ATP</name>
        <dbReference type="ChEBI" id="CHEBI:30616"/>
        <label>2</label>
    </ligand>
</feature>
<feature type="binding site" evidence="1">
    <location>
        <position position="812"/>
    </location>
    <ligand>
        <name>ATP</name>
        <dbReference type="ChEBI" id="CHEBI:30616"/>
        <label>2</label>
    </ligand>
</feature>
<feature type="binding site" evidence="1">
    <location>
        <position position="813"/>
    </location>
    <ligand>
        <name>ATP</name>
        <dbReference type="ChEBI" id="CHEBI:30616"/>
        <label>2</label>
    </ligand>
</feature>
<feature type="binding site" evidence="1">
    <location>
        <position position="814"/>
    </location>
    <ligand>
        <name>ATP</name>
        <dbReference type="ChEBI" id="CHEBI:30616"/>
        <label>2</label>
    </ligand>
</feature>
<feature type="binding site" evidence="1">
    <location>
        <position position="815"/>
    </location>
    <ligand>
        <name>ATP</name>
        <dbReference type="ChEBI" id="CHEBI:30616"/>
        <label>2</label>
    </ligand>
</feature>
<feature type="binding site" evidence="1">
    <location>
        <position position="855"/>
    </location>
    <ligand>
        <name>ATP</name>
        <dbReference type="ChEBI" id="CHEBI:30616"/>
        <label>2</label>
    </ligand>
</feature>
<feature type="binding site" evidence="1">
    <location>
        <position position="855"/>
    </location>
    <ligand>
        <name>Mg(2+)</name>
        <dbReference type="ChEBI" id="CHEBI:18420"/>
        <label>3</label>
    </ligand>
</feature>
<feature type="binding site" evidence="1">
    <location>
        <position position="855"/>
    </location>
    <ligand>
        <name>Mn(2+)</name>
        <dbReference type="ChEBI" id="CHEBI:29035"/>
        <label>3</label>
    </ligand>
</feature>
<feature type="binding site" evidence="1">
    <location>
        <position position="867"/>
    </location>
    <ligand>
        <name>ATP</name>
        <dbReference type="ChEBI" id="CHEBI:30616"/>
        <label>2</label>
    </ligand>
</feature>
<feature type="binding site" evidence="1">
    <location>
        <position position="867"/>
    </location>
    <ligand>
        <name>Mg(2+)</name>
        <dbReference type="ChEBI" id="CHEBI:18420"/>
        <label>3</label>
    </ligand>
</feature>
<feature type="binding site" evidence="1">
    <location>
        <position position="867"/>
    </location>
    <ligand>
        <name>Mg(2+)</name>
        <dbReference type="ChEBI" id="CHEBI:18420"/>
        <label>4</label>
    </ligand>
</feature>
<feature type="binding site" evidence="1">
    <location>
        <position position="867"/>
    </location>
    <ligand>
        <name>Mn(2+)</name>
        <dbReference type="ChEBI" id="CHEBI:29035"/>
        <label>3</label>
    </ligand>
</feature>
<feature type="binding site" evidence="1">
    <location>
        <position position="867"/>
    </location>
    <ligand>
        <name>Mn(2+)</name>
        <dbReference type="ChEBI" id="CHEBI:29035"/>
        <label>4</label>
    </ligand>
</feature>
<feature type="binding site" evidence="1">
    <location>
        <position position="869"/>
    </location>
    <ligand>
        <name>Mg(2+)</name>
        <dbReference type="ChEBI" id="CHEBI:18420"/>
        <label>4</label>
    </ligand>
</feature>
<feature type="binding site" evidence="1">
    <location>
        <position position="869"/>
    </location>
    <ligand>
        <name>Mn(2+)</name>
        <dbReference type="ChEBI" id="CHEBI:29035"/>
        <label>4</label>
    </ligand>
</feature>
<gene>
    <name evidence="1" type="primary">carB</name>
    <name type="ordered locus">Nther_2446</name>
</gene>
<accession>B2A170</accession>
<name>CARB_NATTJ</name>
<organism>
    <name type="scientific">Natranaerobius thermophilus (strain ATCC BAA-1301 / DSM 18059 / JW/NM-WN-LF)</name>
    <dbReference type="NCBI Taxonomy" id="457570"/>
    <lineage>
        <taxon>Bacteria</taxon>
        <taxon>Bacillati</taxon>
        <taxon>Bacillota</taxon>
        <taxon>Clostridia</taxon>
        <taxon>Natranaerobiales</taxon>
        <taxon>Natranaerobiaceae</taxon>
        <taxon>Natranaerobius</taxon>
    </lineage>
</organism>
<reference key="1">
    <citation type="submission" date="2008-04" db="EMBL/GenBank/DDBJ databases">
        <title>Complete sequence of chromosome of Natranaerobius thermophilus JW/NM-WN-LF.</title>
        <authorList>
            <consortium name="US DOE Joint Genome Institute"/>
            <person name="Copeland A."/>
            <person name="Lucas S."/>
            <person name="Lapidus A."/>
            <person name="Glavina del Rio T."/>
            <person name="Dalin E."/>
            <person name="Tice H."/>
            <person name="Bruce D."/>
            <person name="Goodwin L."/>
            <person name="Pitluck S."/>
            <person name="Chertkov O."/>
            <person name="Brettin T."/>
            <person name="Detter J.C."/>
            <person name="Han C."/>
            <person name="Kuske C.R."/>
            <person name="Schmutz J."/>
            <person name="Larimer F."/>
            <person name="Land M."/>
            <person name="Hauser L."/>
            <person name="Kyrpides N."/>
            <person name="Lykidis A."/>
            <person name="Mesbah N.M."/>
            <person name="Wiegel J."/>
        </authorList>
    </citation>
    <scope>NUCLEOTIDE SEQUENCE [LARGE SCALE GENOMIC DNA]</scope>
    <source>
        <strain>ATCC BAA-1301 / DSM 18059 / JW/NM-WN-LF</strain>
    </source>
</reference>
<comment type="function">
    <text evidence="1">Large subunit of the glutamine-dependent carbamoyl phosphate synthetase (CPSase). CPSase catalyzes the formation of carbamoyl phosphate from the ammonia moiety of glutamine, carbonate, and phosphate donated by ATP, constituting the first step of 2 biosynthetic pathways, one leading to arginine and/or urea and the other to pyrimidine nucleotides. The large subunit (synthetase) binds the substrates ammonia (free or transferred from glutamine from the small subunit), hydrogencarbonate and ATP and carries out an ATP-coupled ligase reaction, activating hydrogencarbonate by forming carboxy phosphate which reacts with ammonia to form carbamoyl phosphate.</text>
</comment>
<comment type="catalytic activity">
    <reaction evidence="1">
        <text>hydrogencarbonate + L-glutamine + 2 ATP + H2O = carbamoyl phosphate + L-glutamate + 2 ADP + phosphate + 2 H(+)</text>
        <dbReference type="Rhea" id="RHEA:18633"/>
        <dbReference type="ChEBI" id="CHEBI:15377"/>
        <dbReference type="ChEBI" id="CHEBI:15378"/>
        <dbReference type="ChEBI" id="CHEBI:17544"/>
        <dbReference type="ChEBI" id="CHEBI:29985"/>
        <dbReference type="ChEBI" id="CHEBI:30616"/>
        <dbReference type="ChEBI" id="CHEBI:43474"/>
        <dbReference type="ChEBI" id="CHEBI:58228"/>
        <dbReference type="ChEBI" id="CHEBI:58359"/>
        <dbReference type="ChEBI" id="CHEBI:456216"/>
        <dbReference type="EC" id="6.3.5.5"/>
    </reaction>
</comment>
<comment type="catalytic activity">
    <molecule>Carbamoyl phosphate synthase large chain</molecule>
    <reaction evidence="1">
        <text>hydrogencarbonate + NH4(+) + 2 ATP = carbamoyl phosphate + 2 ADP + phosphate + 2 H(+)</text>
        <dbReference type="Rhea" id="RHEA:18029"/>
        <dbReference type="ChEBI" id="CHEBI:15378"/>
        <dbReference type="ChEBI" id="CHEBI:17544"/>
        <dbReference type="ChEBI" id="CHEBI:28938"/>
        <dbReference type="ChEBI" id="CHEBI:30616"/>
        <dbReference type="ChEBI" id="CHEBI:43474"/>
        <dbReference type="ChEBI" id="CHEBI:58228"/>
        <dbReference type="ChEBI" id="CHEBI:456216"/>
        <dbReference type="EC" id="6.3.4.16"/>
    </reaction>
</comment>
<comment type="cofactor">
    <cofactor evidence="1">
        <name>Mg(2+)</name>
        <dbReference type="ChEBI" id="CHEBI:18420"/>
    </cofactor>
    <cofactor evidence="1">
        <name>Mn(2+)</name>
        <dbReference type="ChEBI" id="CHEBI:29035"/>
    </cofactor>
    <text evidence="1">Binds 4 Mg(2+) or Mn(2+) ions per subunit.</text>
</comment>
<comment type="pathway">
    <text evidence="1">Amino-acid biosynthesis; L-arginine biosynthesis; carbamoyl phosphate from bicarbonate: step 1/1.</text>
</comment>
<comment type="pathway">
    <text evidence="1">Pyrimidine metabolism; UMP biosynthesis via de novo pathway; (S)-dihydroorotate from bicarbonate: step 1/3.</text>
</comment>
<comment type="subunit">
    <text evidence="1">Composed of two chains; the small (or glutamine) chain promotes the hydrolysis of glutamine to ammonia, which is used by the large (or ammonia) chain to synthesize carbamoyl phosphate. Tetramer of heterodimers (alpha,beta)4.</text>
</comment>
<comment type="domain">
    <text evidence="1">The large subunit is composed of 2 ATP-grasp domains that are involved in binding the 2 ATP molecules needed for carbamoyl phosphate synthesis. The N-terminal ATP-grasp domain (referred to as the carboxyphosphate synthetic component) catalyzes the ATP-dependent phosphorylation of hydrogencarbonate to carboxyphosphate and the subsequent nucleophilic attack by ammonia to form a carbamate intermediate. The C-terminal ATP-grasp domain (referred to as the carbamoyl phosphate synthetic component) then catalyzes the phosphorylation of carbamate with the second ATP to form the end product carbamoyl phosphate. The reactive and unstable enzyme intermediates are sequentially channeled from one active site to the next through the interior of the protein over a distance of at least 96 A.</text>
</comment>
<comment type="similarity">
    <text evidence="1">Belongs to the CarB family.</text>
</comment>
<dbReference type="EC" id="6.3.4.16" evidence="1"/>
<dbReference type="EC" id="6.3.5.5" evidence="1"/>
<dbReference type="EMBL" id="CP001034">
    <property type="protein sequence ID" value="ACB86011.1"/>
    <property type="molecule type" value="Genomic_DNA"/>
</dbReference>
<dbReference type="RefSeq" id="WP_012448856.1">
    <property type="nucleotide sequence ID" value="NC_010718.1"/>
</dbReference>
<dbReference type="SMR" id="B2A170"/>
<dbReference type="FunCoup" id="B2A170">
    <property type="interactions" value="388"/>
</dbReference>
<dbReference type="STRING" id="457570.Nther_2446"/>
<dbReference type="KEGG" id="nth:Nther_2446"/>
<dbReference type="eggNOG" id="COG0458">
    <property type="taxonomic scope" value="Bacteria"/>
</dbReference>
<dbReference type="HOGENOM" id="CLU_000513_1_3_9"/>
<dbReference type="InParanoid" id="B2A170"/>
<dbReference type="OrthoDB" id="9804197at2"/>
<dbReference type="UniPathway" id="UPA00068">
    <property type="reaction ID" value="UER00171"/>
</dbReference>
<dbReference type="UniPathway" id="UPA00070">
    <property type="reaction ID" value="UER00115"/>
</dbReference>
<dbReference type="Proteomes" id="UP000001683">
    <property type="component" value="Chromosome"/>
</dbReference>
<dbReference type="GO" id="GO:0005737">
    <property type="term" value="C:cytoplasm"/>
    <property type="evidence" value="ECO:0007669"/>
    <property type="project" value="TreeGrafter"/>
</dbReference>
<dbReference type="GO" id="GO:0005524">
    <property type="term" value="F:ATP binding"/>
    <property type="evidence" value="ECO:0007669"/>
    <property type="project" value="UniProtKB-UniRule"/>
</dbReference>
<dbReference type="GO" id="GO:0004087">
    <property type="term" value="F:carbamoyl-phosphate synthase (ammonia) activity"/>
    <property type="evidence" value="ECO:0007669"/>
    <property type="project" value="RHEA"/>
</dbReference>
<dbReference type="GO" id="GO:0004088">
    <property type="term" value="F:carbamoyl-phosphate synthase (glutamine-hydrolyzing) activity"/>
    <property type="evidence" value="ECO:0007669"/>
    <property type="project" value="UniProtKB-UniRule"/>
</dbReference>
<dbReference type="GO" id="GO:0046872">
    <property type="term" value="F:metal ion binding"/>
    <property type="evidence" value="ECO:0007669"/>
    <property type="project" value="UniProtKB-KW"/>
</dbReference>
<dbReference type="GO" id="GO:0044205">
    <property type="term" value="P:'de novo' UMP biosynthetic process"/>
    <property type="evidence" value="ECO:0007669"/>
    <property type="project" value="UniProtKB-UniRule"/>
</dbReference>
<dbReference type="GO" id="GO:0006541">
    <property type="term" value="P:glutamine metabolic process"/>
    <property type="evidence" value="ECO:0007669"/>
    <property type="project" value="TreeGrafter"/>
</dbReference>
<dbReference type="GO" id="GO:0006526">
    <property type="term" value="P:L-arginine biosynthetic process"/>
    <property type="evidence" value="ECO:0007669"/>
    <property type="project" value="UniProtKB-UniRule"/>
</dbReference>
<dbReference type="CDD" id="cd01424">
    <property type="entry name" value="MGS_CPS_II"/>
    <property type="match status" value="1"/>
</dbReference>
<dbReference type="FunFam" id="3.30.1490.20:FF:000001">
    <property type="entry name" value="Carbamoyl-phosphate synthase large chain"/>
    <property type="match status" value="1"/>
</dbReference>
<dbReference type="FunFam" id="3.30.470.20:FF:000001">
    <property type="entry name" value="Carbamoyl-phosphate synthase large chain"/>
    <property type="match status" value="1"/>
</dbReference>
<dbReference type="FunFam" id="3.30.470.20:FF:000026">
    <property type="entry name" value="Carbamoyl-phosphate synthase large chain"/>
    <property type="match status" value="1"/>
</dbReference>
<dbReference type="FunFam" id="3.40.50.20:FF:000001">
    <property type="entry name" value="Carbamoyl-phosphate synthase large chain"/>
    <property type="match status" value="2"/>
</dbReference>
<dbReference type="Gene3D" id="3.40.50.20">
    <property type="match status" value="2"/>
</dbReference>
<dbReference type="Gene3D" id="3.30.470.20">
    <property type="entry name" value="ATP-grasp fold, B domain"/>
    <property type="match status" value="2"/>
</dbReference>
<dbReference type="Gene3D" id="1.10.1030.10">
    <property type="entry name" value="Carbamoyl-phosphate synthetase, large subunit oligomerisation domain"/>
    <property type="match status" value="1"/>
</dbReference>
<dbReference type="Gene3D" id="3.40.50.1380">
    <property type="entry name" value="Methylglyoxal synthase-like domain"/>
    <property type="match status" value="1"/>
</dbReference>
<dbReference type="HAMAP" id="MF_01210_A">
    <property type="entry name" value="CPSase_L_chain_A"/>
    <property type="match status" value="1"/>
</dbReference>
<dbReference type="HAMAP" id="MF_01210_B">
    <property type="entry name" value="CPSase_L_chain_B"/>
    <property type="match status" value="1"/>
</dbReference>
<dbReference type="InterPro" id="IPR011761">
    <property type="entry name" value="ATP-grasp"/>
</dbReference>
<dbReference type="InterPro" id="IPR006275">
    <property type="entry name" value="CarbamoylP_synth_lsu"/>
</dbReference>
<dbReference type="InterPro" id="IPR005480">
    <property type="entry name" value="CarbamoylP_synth_lsu_oligo"/>
</dbReference>
<dbReference type="InterPro" id="IPR036897">
    <property type="entry name" value="CarbamoylP_synth_lsu_oligo_sf"/>
</dbReference>
<dbReference type="InterPro" id="IPR005479">
    <property type="entry name" value="CbamoylP_synth_lsu-like_ATP-bd"/>
</dbReference>
<dbReference type="InterPro" id="IPR005483">
    <property type="entry name" value="CbamoylP_synth_lsu_CPSase_dom"/>
</dbReference>
<dbReference type="InterPro" id="IPR011607">
    <property type="entry name" value="MGS-like_dom"/>
</dbReference>
<dbReference type="InterPro" id="IPR036914">
    <property type="entry name" value="MGS-like_dom_sf"/>
</dbReference>
<dbReference type="InterPro" id="IPR033937">
    <property type="entry name" value="MGS_CPS_CarB"/>
</dbReference>
<dbReference type="InterPro" id="IPR016185">
    <property type="entry name" value="PreATP-grasp_dom_sf"/>
</dbReference>
<dbReference type="NCBIfam" id="NF003671">
    <property type="entry name" value="PRK05294.1"/>
    <property type="match status" value="1"/>
</dbReference>
<dbReference type="PANTHER" id="PTHR11405:SF53">
    <property type="entry name" value="CARBAMOYL-PHOSPHATE SYNTHASE [AMMONIA], MITOCHONDRIAL"/>
    <property type="match status" value="1"/>
</dbReference>
<dbReference type="PANTHER" id="PTHR11405">
    <property type="entry name" value="CARBAMOYLTRANSFERASE FAMILY MEMBER"/>
    <property type="match status" value="1"/>
</dbReference>
<dbReference type="Pfam" id="PF02786">
    <property type="entry name" value="CPSase_L_D2"/>
    <property type="match status" value="2"/>
</dbReference>
<dbReference type="Pfam" id="PF02787">
    <property type="entry name" value="CPSase_L_D3"/>
    <property type="match status" value="1"/>
</dbReference>
<dbReference type="Pfam" id="PF02142">
    <property type="entry name" value="MGS"/>
    <property type="match status" value="1"/>
</dbReference>
<dbReference type="PRINTS" id="PR00098">
    <property type="entry name" value="CPSASE"/>
</dbReference>
<dbReference type="SMART" id="SM01096">
    <property type="entry name" value="CPSase_L_D3"/>
    <property type="match status" value="1"/>
</dbReference>
<dbReference type="SMART" id="SM01209">
    <property type="entry name" value="GARS_A"/>
    <property type="match status" value="1"/>
</dbReference>
<dbReference type="SMART" id="SM00851">
    <property type="entry name" value="MGS"/>
    <property type="match status" value="1"/>
</dbReference>
<dbReference type="SUPFAM" id="SSF48108">
    <property type="entry name" value="Carbamoyl phosphate synthetase, large subunit connection domain"/>
    <property type="match status" value="1"/>
</dbReference>
<dbReference type="SUPFAM" id="SSF56059">
    <property type="entry name" value="Glutathione synthetase ATP-binding domain-like"/>
    <property type="match status" value="2"/>
</dbReference>
<dbReference type="SUPFAM" id="SSF52335">
    <property type="entry name" value="Methylglyoxal synthase-like"/>
    <property type="match status" value="1"/>
</dbReference>
<dbReference type="SUPFAM" id="SSF52440">
    <property type="entry name" value="PreATP-grasp domain"/>
    <property type="match status" value="2"/>
</dbReference>
<dbReference type="PROSITE" id="PS50975">
    <property type="entry name" value="ATP_GRASP"/>
    <property type="match status" value="2"/>
</dbReference>
<dbReference type="PROSITE" id="PS00866">
    <property type="entry name" value="CPSASE_1"/>
    <property type="match status" value="2"/>
</dbReference>
<dbReference type="PROSITE" id="PS00867">
    <property type="entry name" value="CPSASE_2"/>
    <property type="match status" value="2"/>
</dbReference>
<dbReference type="PROSITE" id="PS51855">
    <property type="entry name" value="MGS"/>
    <property type="match status" value="1"/>
</dbReference>
<protein>
    <recommendedName>
        <fullName evidence="1">Carbamoyl phosphate synthase large chain</fullName>
        <ecNumber evidence="1">6.3.4.16</ecNumber>
        <ecNumber evidence="1">6.3.5.5</ecNumber>
    </recommendedName>
    <alternativeName>
        <fullName evidence="1">Carbamoyl phosphate synthetase ammonia chain</fullName>
    </alternativeName>
</protein>
<proteinExistence type="inferred from homology"/>